<feature type="chain" id="PRO_0000090558" description="L-rhamnose isomerase">
    <location>
        <begin position="1"/>
        <end position="420"/>
    </location>
</feature>
<feature type="binding site" evidence="1">
    <location>
        <position position="264"/>
    </location>
    <ligand>
        <name>Mn(2+)</name>
        <dbReference type="ChEBI" id="CHEBI:29035"/>
    </ligand>
</feature>
<feature type="binding site" evidence="1">
    <location>
        <position position="296"/>
    </location>
    <ligand>
        <name>Mn(2+)</name>
        <dbReference type="ChEBI" id="CHEBI:29035"/>
    </ligand>
</feature>
<feature type="binding site" evidence="1">
    <location>
        <position position="298"/>
    </location>
    <ligand>
        <name>Mn(2+)</name>
        <dbReference type="ChEBI" id="CHEBI:29035"/>
    </ligand>
</feature>
<sequence length="420" mass="48050">MGQETEISKRYQVAKERYQAIGVDTEKALKTLKDIKISMHCWQGDDVKGFLNPDGELTGGIMATGNYPGAAHTPKQLRQDLEKAYSLIPGKHKLNLHAIYVDTDEKVDLNEIEPKHFTPWVEWAKEQGLGLDFNPTFFSHPMFKDNYTLASPDKEVRDFWIEHGKRSRKISEYFGKELGQTSINNFWVPDGIKDCPIDRYTPRKRLMEALDEVFAEKLDEKYTQEAVESKLFGLGAEAYTVGSHEFYMGYGITRDKLICLDAGHFHPTEVISNKLSSLALFSKGVMLHVSRPVRWDSDHVVIMDDELIEIGRELVRNDLLGITNIGLDFFDATINRIAAWVVGTRNTQKSLLKALLEPTADLKKMELENDFTSRMAITEELKDFPFGDVWNYFCEINGVPVGLDWLKEVKAYEKDVLLKR</sequence>
<dbReference type="EC" id="5.3.1.14" evidence="1"/>
<dbReference type="EMBL" id="AL596174">
    <property type="protein sequence ID" value="CAC98205.1"/>
    <property type="molecule type" value="Genomic_DNA"/>
</dbReference>
<dbReference type="PIR" id="AE1804">
    <property type="entry name" value="AE1804"/>
</dbReference>
<dbReference type="RefSeq" id="WP_003772729.1">
    <property type="nucleotide sequence ID" value="NC_003212.1"/>
</dbReference>
<dbReference type="SMR" id="Q926R1"/>
<dbReference type="STRING" id="272626.gene:17567367"/>
<dbReference type="GeneID" id="93236257"/>
<dbReference type="KEGG" id="lin:lin2980"/>
<dbReference type="eggNOG" id="COG4806">
    <property type="taxonomic scope" value="Bacteria"/>
</dbReference>
<dbReference type="HOGENOM" id="CLU_052790_0_0_9"/>
<dbReference type="OrthoDB" id="9766697at2"/>
<dbReference type="UniPathway" id="UPA00541">
    <property type="reaction ID" value="UER00601"/>
</dbReference>
<dbReference type="Proteomes" id="UP000002513">
    <property type="component" value="Chromosome"/>
</dbReference>
<dbReference type="GO" id="GO:0005737">
    <property type="term" value="C:cytoplasm"/>
    <property type="evidence" value="ECO:0007669"/>
    <property type="project" value="UniProtKB-SubCell"/>
</dbReference>
<dbReference type="GO" id="GO:0008740">
    <property type="term" value="F:L-rhamnose isomerase activity"/>
    <property type="evidence" value="ECO:0007669"/>
    <property type="project" value="UniProtKB-UniRule"/>
</dbReference>
<dbReference type="GO" id="GO:0030145">
    <property type="term" value="F:manganese ion binding"/>
    <property type="evidence" value="ECO:0007669"/>
    <property type="project" value="UniProtKB-UniRule"/>
</dbReference>
<dbReference type="GO" id="GO:0019324">
    <property type="term" value="P:L-lyxose metabolic process"/>
    <property type="evidence" value="ECO:0007669"/>
    <property type="project" value="TreeGrafter"/>
</dbReference>
<dbReference type="GO" id="GO:0019301">
    <property type="term" value="P:rhamnose catabolic process"/>
    <property type="evidence" value="ECO:0007669"/>
    <property type="project" value="UniProtKB-UniRule"/>
</dbReference>
<dbReference type="FunFam" id="3.20.20.150:FF:000006">
    <property type="entry name" value="L-rhamnose isomerase"/>
    <property type="match status" value="1"/>
</dbReference>
<dbReference type="Gene3D" id="3.20.20.150">
    <property type="entry name" value="Divalent-metal-dependent TIM barrel enzymes"/>
    <property type="match status" value="1"/>
</dbReference>
<dbReference type="HAMAP" id="MF_00541">
    <property type="entry name" value="RhaA"/>
    <property type="match status" value="1"/>
</dbReference>
<dbReference type="InterPro" id="IPR050337">
    <property type="entry name" value="L-rhamnose_isomerase"/>
</dbReference>
<dbReference type="InterPro" id="IPR009308">
    <property type="entry name" value="Rhamnose_isomerase"/>
</dbReference>
<dbReference type="InterPro" id="IPR036237">
    <property type="entry name" value="Xyl_isomerase-like_sf"/>
</dbReference>
<dbReference type="NCBIfam" id="NF002203">
    <property type="entry name" value="PRK01076.1"/>
    <property type="match status" value="1"/>
</dbReference>
<dbReference type="NCBIfam" id="TIGR01748">
    <property type="entry name" value="rhaA"/>
    <property type="match status" value="1"/>
</dbReference>
<dbReference type="PANTHER" id="PTHR30268">
    <property type="entry name" value="L-RHAMNOSE ISOMERASE"/>
    <property type="match status" value="1"/>
</dbReference>
<dbReference type="PANTHER" id="PTHR30268:SF0">
    <property type="entry name" value="L-RHAMNOSE ISOMERASE"/>
    <property type="match status" value="1"/>
</dbReference>
<dbReference type="Pfam" id="PF06134">
    <property type="entry name" value="RhaA"/>
    <property type="match status" value="1"/>
</dbReference>
<dbReference type="SUPFAM" id="SSF51658">
    <property type="entry name" value="Xylose isomerase-like"/>
    <property type="match status" value="1"/>
</dbReference>
<gene>
    <name evidence="1" type="primary">rhaA</name>
    <name type="ordered locus">lin2980</name>
</gene>
<proteinExistence type="inferred from homology"/>
<evidence type="ECO:0000255" key="1">
    <source>
        <dbReference type="HAMAP-Rule" id="MF_00541"/>
    </source>
</evidence>
<protein>
    <recommendedName>
        <fullName evidence="1">L-rhamnose isomerase</fullName>
        <ecNumber evidence="1">5.3.1.14</ecNumber>
    </recommendedName>
</protein>
<comment type="function">
    <text evidence="1">Catalyzes the interconversion of L-rhamnose and L-rhamnulose.</text>
</comment>
<comment type="catalytic activity">
    <reaction evidence="1">
        <text>L-rhamnopyranose = L-rhamnulose</text>
        <dbReference type="Rhea" id="RHEA:23160"/>
        <dbReference type="ChEBI" id="CHEBI:17897"/>
        <dbReference type="ChEBI" id="CHEBI:62346"/>
        <dbReference type="EC" id="5.3.1.14"/>
    </reaction>
</comment>
<comment type="cofactor">
    <cofactor evidence="1">
        <name>Mn(2+)</name>
        <dbReference type="ChEBI" id="CHEBI:29035"/>
    </cofactor>
    <text evidence="1">Binds 1 Mn(2+) ion per subunit.</text>
</comment>
<comment type="pathway">
    <text evidence="1">Carbohydrate degradation; L-rhamnose degradation; glycerone phosphate from L-rhamnose: step 1/3.</text>
</comment>
<comment type="subcellular location">
    <subcellularLocation>
        <location evidence="1">Cytoplasm</location>
    </subcellularLocation>
</comment>
<comment type="similarity">
    <text evidence="1">Belongs to the rhamnose isomerase family.</text>
</comment>
<reference key="1">
    <citation type="journal article" date="2001" name="Science">
        <title>Comparative genomics of Listeria species.</title>
        <authorList>
            <person name="Glaser P."/>
            <person name="Frangeul L."/>
            <person name="Buchrieser C."/>
            <person name="Rusniok C."/>
            <person name="Amend A."/>
            <person name="Baquero F."/>
            <person name="Berche P."/>
            <person name="Bloecker H."/>
            <person name="Brandt P."/>
            <person name="Chakraborty T."/>
            <person name="Charbit A."/>
            <person name="Chetouani F."/>
            <person name="Couve E."/>
            <person name="de Daruvar A."/>
            <person name="Dehoux P."/>
            <person name="Domann E."/>
            <person name="Dominguez-Bernal G."/>
            <person name="Duchaud E."/>
            <person name="Durant L."/>
            <person name="Dussurget O."/>
            <person name="Entian K.-D."/>
            <person name="Fsihi H."/>
            <person name="Garcia-del Portillo F."/>
            <person name="Garrido P."/>
            <person name="Gautier L."/>
            <person name="Goebel W."/>
            <person name="Gomez-Lopez N."/>
            <person name="Hain T."/>
            <person name="Hauf J."/>
            <person name="Jackson D."/>
            <person name="Jones L.-M."/>
            <person name="Kaerst U."/>
            <person name="Kreft J."/>
            <person name="Kuhn M."/>
            <person name="Kunst F."/>
            <person name="Kurapkat G."/>
            <person name="Madueno E."/>
            <person name="Maitournam A."/>
            <person name="Mata Vicente J."/>
            <person name="Ng E."/>
            <person name="Nedjari H."/>
            <person name="Nordsiek G."/>
            <person name="Novella S."/>
            <person name="de Pablos B."/>
            <person name="Perez-Diaz J.-C."/>
            <person name="Purcell R."/>
            <person name="Remmel B."/>
            <person name="Rose M."/>
            <person name="Schlueter T."/>
            <person name="Simoes N."/>
            <person name="Tierrez A."/>
            <person name="Vazquez-Boland J.-A."/>
            <person name="Voss H."/>
            <person name="Wehland J."/>
            <person name="Cossart P."/>
        </authorList>
    </citation>
    <scope>NUCLEOTIDE SEQUENCE [LARGE SCALE GENOMIC DNA]</scope>
    <source>
        <strain>ATCC BAA-680 / CLIP 11262</strain>
    </source>
</reference>
<name>RHAA_LISIN</name>
<organism>
    <name type="scientific">Listeria innocua serovar 6a (strain ATCC BAA-680 / CLIP 11262)</name>
    <dbReference type="NCBI Taxonomy" id="272626"/>
    <lineage>
        <taxon>Bacteria</taxon>
        <taxon>Bacillati</taxon>
        <taxon>Bacillota</taxon>
        <taxon>Bacilli</taxon>
        <taxon>Bacillales</taxon>
        <taxon>Listeriaceae</taxon>
        <taxon>Listeria</taxon>
    </lineage>
</organism>
<keyword id="KW-0963">Cytoplasm</keyword>
<keyword id="KW-0413">Isomerase</keyword>
<keyword id="KW-0464">Manganese</keyword>
<keyword id="KW-0479">Metal-binding</keyword>
<keyword id="KW-0684">Rhamnose metabolism</keyword>
<accession>Q926R1</accession>